<feature type="chain" id="PRO_0000405917" description="Phosphatidylethanolamine N-methyltransferase">
    <location>
        <begin position="1"/>
        <end position="894"/>
    </location>
</feature>
<feature type="topological domain" description="Lumenal" evidence="1">
    <location>
        <begin position="1"/>
        <end position="90"/>
    </location>
</feature>
<feature type="transmembrane region" description="Helical" evidence="1">
    <location>
        <begin position="91"/>
        <end position="111"/>
    </location>
</feature>
<feature type="topological domain" description="Cytoplasmic" evidence="1">
    <location>
        <begin position="112"/>
        <end position="113"/>
    </location>
</feature>
<feature type="transmembrane region" description="Helical" evidence="1">
    <location>
        <begin position="114"/>
        <end position="134"/>
    </location>
</feature>
<feature type="topological domain" description="Lumenal" evidence="1">
    <location>
        <begin position="135"/>
        <end position="195"/>
    </location>
</feature>
<feature type="transmembrane region" description="Helical" evidence="1">
    <location>
        <begin position="196"/>
        <end position="216"/>
    </location>
</feature>
<feature type="topological domain" description="Cytoplasmic" evidence="1">
    <location>
        <begin position="217"/>
        <end position="222"/>
    </location>
</feature>
<feature type="transmembrane region" description="Helical" evidence="1">
    <location>
        <begin position="223"/>
        <end position="243"/>
    </location>
</feature>
<feature type="topological domain" description="Lumenal" evidence="1">
    <location>
        <begin position="244"/>
        <end position="268"/>
    </location>
</feature>
<feature type="transmembrane region" description="Helical" evidence="1">
    <location>
        <begin position="269"/>
        <end position="289"/>
    </location>
</feature>
<feature type="topological domain" description="Cytoplasmic" evidence="1">
    <location>
        <begin position="290"/>
        <end position="299"/>
    </location>
</feature>
<feature type="transmembrane region" description="Helical" evidence="1">
    <location>
        <begin position="300"/>
        <end position="320"/>
    </location>
</feature>
<feature type="topological domain" description="Lumenal" evidence="1">
    <location>
        <begin position="321"/>
        <end position="366"/>
    </location>
</feature>
<feature type="transmembrane region" description="Helical" evidence="1">
    <location>
        <begin position="367"/>
        <end position="387"/>
    </location>
</feature>
<feature type="topological domain" description="Cytoplasmic" evidence="1">
    <location>
        <begin position="388"/>
        <end position="394"/>
    </location>
</feature>
<feature type="transmembrane region" description="Helical" evidence="1">
    <location>
        <begin position="395"/>
        <end position="415"/>
    </location>
</feature>
<feature type="topological domain" description="Lumenal" evidence="1">
    <location>
        <begin position="416"/>
        <end position="447"/>
    </location>
</feature>
<feature type="transmembrane region" description="Helical" evidence="1">
    <location>
        <begin position="448"/>
        <end position="468"/>
    </location>
</feature>
<feature type="topological domain" description="Cytoplasmic" evidence="1">
    <location>
        <begin position="469"/>
        <end position="470"/>
    </location>
</feature>
<feature type="transmembrane region" description="Helical" evidence="1">
    <location>
        <begin position="471"/>
        <end position="491"/>
    </location>
</feature>
<feature type="topological domain" description="Lumenal" evidence="1">
    <location>
        <begin position="492"/>
        <end position="538"/>
    </location>
</feature>
<feature type="transmembrane region" description="Helical" evidence="1">
    <location>
        <begin position="539"/>
        <end position="559"/>
    </location>
</feature>
<feature type="topological domain" description="Cytoplasmic" evidence="1">
    <location>
        <begin position="560"/>
        <end position="894"/>
    </location>
</feature>
<comment type="function">
    <text evidence="1">Catalyzes the first step of the methylation pathway of phosphatidylcholine biosynthesis, the SAM-dependent methylation of phosphatidylethanolamine (PE) to phosphatidylmonomethylethanolamine (PMME).</text>
</comment>
<comment type="catalytic activity">
    <reaction evidence="1">
        <text>a 1,2-diacyl-sn-glycero-3-phosphoethanolamine + S-adenosyl-L-methionine = a 1,2-diacyl-sn-glycero-3-phospho-N-methylethanolamine + S-adenosyl-L-homocysteine + H(+)</text>
        <dbReference type="Rhea" id="RHEA:11164"/>
        <dbReference type="ChEBI" id="CHEBI:15378"/>
        <dbReference type="ChEBI" id="CHEBI:57856"/>
        <dbReference type="ChEBI" id="CHEBI:59789"/>
        <dbReference type="ChEBI" id="CHEBI:64573"/>
        <dbReference type="ChEBI" id="CHEBI:64612"/>
        <dbReference type="EC" id="2.1.1.17"/>
    </reaction>
</comment>
<comment type="pathway">
    <text evidence="1">Phospholipid metabolism; phosphatidylcholine biosynthesis.</text>
</comment>
<comment type="subcellular location">
    <subcellularLocation>
        <location evidence="1">Endoplasmic reticulum membrane</location>
        <topology evidence="1">Multi-pass membrane protein</topology>
    </subcellularLocation>
</comment>
<comment type="similarity">
    <text evidence="1">Belongs to the class VI-like SAM-binding methyltransferase superfamily. CHO2 family.</text>
</comment>
<protein>
    <recommendedName>
        <fullName evidence="1">Phosphatidylethanolamine N-methyltransferase</fullName>
        <shortName evidence="1">PE methyltransferase</shortName>
        <shortName evidence="1">PEAMT</shortName>
        <shortName evidence="1">PEMT</shortName>
        <ecNumber evidence="1">2.1.1.17</ecNumber>
    </recommendedName>
</protein>
<gene>
    <name type="primary">cho2</name>
    <name type="ORF">SJAG_00825</name>
</gene>
<evidence type="ECO:0000255" key="1">
    <source>
        <dbReference type="HAMAP-Rule" id="MF_03217"/>
    </source>
</evidence>
<proteinExistence type="inferred from homology"/>
<reference key="1">
    <citation type="journal article" date="2011" name="Science">
        <title>Comparative functional genomics of the fission yeasts.</title>
        <authorList>
            <person name="Rhind N."/>
            <person name="Chen Z."/>
            <person name="Yassour M."/>
            <person name="Thompson D.A."/>
            <person name="Haas B.J."/>
            <person name="Habib N."/>
            <person name="Wapinski I."/>
            <person name="Roy S."/>
            <person name="Lin M.F."/>
            <person name="Heiman D.I."/>
            <person name="Young S.K."/>
            <person name="Furuya K."/>
            <person name="Guo Y."/>
            <person name="Pidoux A."/>
            <person name="Chen H.M."/>
            <person name="Robbertse B."/>
            <person name="Goldberg J.M."/>
            <person name="Aoki K."/>
            <person name="Bayne E.H."/>
            <person name="Berlin A.M."/>
            <person name="Desjardins C.A."/>
            <person name="Dobbs E."/>
            <person name="Dukaj L."/>
            <person name="Fan L."/>
            <person name="FitzGerald M.G."/>
            <person name="French C."/>
            <person name="Gujja S."/>
            <person name="Hansen K."/>
            <person name="Keifenheim D."/>
            <person name="Levin J.Z."/>
            <person name="Mosher R.A."/>
            <person name="Mueller C.A."/>
            <person name="Pfiffner J."/>
            <person name="Priest M."/>
            <person name="Russ C."/>
            <person name="Smialowska A."/>
            <person name="Swoboda P."/>
            <person name="Sykes S.M."/>
            <person name="Vaughn M."/>
            <person name="Vengrova S."/>
            <person name="Yoder R."/>
            <person name="Zeng Q."/>
            <person name="Allshire R."/>
            <person name="Baulcombe D."/>
            <person name="Birren B.W."/>
            <person name="Brown W."/>
            <person name="Ekwall K."/>
            <person name="Kellis M."/>
            <person name="Leatherwood J."/>
            <person name="Levin H."/>
            <person name="Margalit H."/>
            <person name="Martienssen R."/>
            <person name="Nieduszynski C.A."/>
            <person name="Spatafora J.W."/>
            <person name="Friedman N."/>
            <person name="Dalgaard J.Z."/>
            <person name="Baumann P."/>
            <person name="Niki H."/>
            <person name="Regev A."/>
            <person name="Nusbaum C."/>
        </authorList>
    </citation>
    <scope>NUCLEOTIDE SEQUENCE [LARGE SCALE GENOMIC DNA]</scope>
    <source>
        <strain>yFS275 / FY16936</strain>
    </source>
</reference>
<organism>
    <name type="scientific">Schizosaccharomyces japonicus (strain yFS275 / FY16936)</name>
    <name type="common">Fission yeast</name>
    <dbReference type="NCBI Taxonomy" id="402676"/>
    <lineage>
        <taxon>Eukaryota</taxon>
        <taxon>Fungi</taxon>
        <taxon>Dikarya</taxon>
        <taxon>Ascomycota</taxon>
        <taxon>Taphrinomycotina</taxon>
        <taxon>Schizosaccharomycetes</taxon>
        <taxon>Schizosaccharomycetales</taxon>
        <taxon>Schizosaccharomycetaceae</taxon>
        <taxon>Schizosaccharomyces</taxon>
    </lineage>
</organism>
<keyword id="KW-0256">Endoplasmic reticulum</keyword>
<keyword id="KW-0444">Lipid biosynthesis</keyword>
<keyword id="KW-0443">Lipid metabolism</keyword>
<keyword id="KW-0472">Membrane</keyword>
<keyword id="KW-0489">Methyltransferase</keyword>
<keyword id="KW-0594">Phospholipid biosynthesis</keyword>
<keyword id="KW-1208">Phospholipid metabolism</keyword>
<keyword id="KW-1185">Reference proteome</keyword>
<keyword id="KW-0949">S-adenosyl-L-methionine</keyword>
<keyword id="KW-0808">Transferase</keyword>
<keyword id="KW-0812">Transmembrane</keyword>
<keyword id="KW-1133">Transmembrane helix</keyword>
<accession>B6JWP7</accession>
<name>CHO2_SCHJY</name>
<dbReference type="EC" id="2.1.1.17" evidence="1"/>
<dbReference type="EMBL" id="KE651166">
    <property type="protein sequence ID" value="EEB05798.1"/>
    <property type="molecule type" value="Genomic_DNA"/>
</dbReference>
<dbReference type="RefSeq" id="XP_002172091.1">
    <property type="nucleotide sequence ID" value="XM_002172055.2"/>
</dbReference>
<dbReference type="SMR" id="B6JWP7"/>
<dbReference type="STRING" id="402676.B6JWP7"/>
<dbReference type="EnsemblFungi" id="EEB05798">
    <property type="protein sequence ID" value="EEB05798"/>
    <property type="gene ID" value="SJAG_00825"/>
</dbReference>
<dbReference type="GeneID" id="7048899"/>
<dbReference type="JaponicusDB" id="SJAG_00825">
    <property type="gene designation" value="cho2"/>
</dbReference>
<dbReference type="VEuPathDB" id="FungiDB:SJAG_00825"/>
<dbReference type="eggNOG" id="ENOG502QRGH">
    <property type="taxonomic scope" value="Eukaryota"/>
</dbReference>
<dbReference type="HOGENOM" id="CLU_005987_0_1_1"/>
<dbReference type="OMA" id="RIWYSVG"/>
<dbReference type="OrthoDB" id="4583at2759"/>
<dbReference type="UniPathway" id="UPA00753"/>
<dbReference type="Proteomes" id="UP000001744">
    <property type="component" value="Unassembled WGS sequence"/>
</dbReference>
<dbReference type="GO" id="GO:0032541">
    <property type="term" value="C:cortical endoplasmic reticulum"/>
    <property type="evidence" value="ECO:0007669"/>
    <property type="project" value="EnsemblFungi"/>
</dbReference>
<dbReference type="GO" id="GO:0005789">
    <property type="term" value="C:endoplasmic reticulum membrane"/>
    <property type="evidence" value="ECO:0007669"/>
    <property type="project" value="UniProtKB-SubCell"/>
</dbReference>
<dbReference type="GO" id="GO:0097038">
    <property type="term" value="C:perinuclear endoplasmic reticulum"/>
    <property type="evidence" value="ECO:0007669"/>
    <property type="project" value="EnsemblFungi"/>
</dbReference>
<dbReference type="GO" id="GO:0004608">
    <property type="term" value="F:phosphatidylethanolamine N-methyltransferase activity"/>
    <property type="evidence" value="ECO:0000318"/>
    <property type="project" value="GO_Central"/>
</dbReference>
<dbReference type="GO" id="GO:0032259">
    <property type="term" value="P:methylation"/>
    <property type="evidence" value="ECO:0007669"/>
    <property type="project" value="UniProtKB-KW"/>
</dbReference>
<dbReference type="GO" id="GO:0006656">
    <property type="term" value="P:phosphatidylcholine biosynthetic process"/>
    <property type="evidence" value="ECO:0000318"/>
    <property type="project" value="GO_Central"/>
</dbReference>
<dbReference type="Gene3D" id="2.60.40.2840">
    <property type="match status" value="1"/>
</dbReference>
<dbReference type="HAMAP" id="MF_03217">
    <property type="entry name" value="PEMT"/>
    <property type="match status" value="1"/>
</dbReference>
<dbReference type="InterPro" id="IPR007318">
    <property type="entry name" value="Phopholipid_MeTrfase"/>
</dbReference>
<dbReference type="InterPro" id="IPR016219">
    <property type="entry name" value="Phosphatid-EA_MeTrfase_fun"/>
</dbReference>
<dbReference type="PANTHER" id="PTHR32138">
    <property type="entry name" value="PHOSPHATIDYLETHANOLAMINE N-METHYLTRANSFERASE"/>
    <property type="match status" value="1"/>
</dbReference>
<dbReference type="PANTHER" id="PTHR32138:SF0">
    <property type="entry name" value="PHOSPHATIDYLETHANOLAMINE N-METHYLTRANSFERASE"/>
    <property type="match status" value="1"/>
</dbReference>
<dbReference type="Pfam" id="PF04191">
    <property type="entry name" value="PEMT"/>
    <property type="match status" value="2"/>
</dbReference>
<dbReference type="PIRSF" id="PIRSF000383">
    <property type="entry name" value="PEAMT"/>
    <property type="match status" value="1"/>
</dbReference>
<dbReference type="PROSITE" id="PS51598">
    <property type="entry name" value="SAM_CHO2"/>
    <property type="match status" value="1"/>
</dbReference>
<sequence>MIDSAAKENTITPIMSLETEEALNSGGKSCEEQKCKKNATANIKVVENEDSEARLGQTPSGQIFVLPHDPPNRRSILETVDFRVPKTPWDLVVDGVILAQVLLFFVTSGMVRRFLMLGCFFFWRVSYDAGIGYLLHKQSHQQKIVDWIVGMGFFDKTNHPKLYEMTKRQLKAKMDSSYDFENSPVEFNAWLVFRHFVDLVLMCDFCSYVLMACAWLCWPKMNFFAHILRIGAGYLLLVFNLWVKMDAHRVVRDYAWYWGDFFFRLRGTLVFNGVFELAPHPMYSIGYAGYYGMSLITGSYMVLFASIVAHMAQFAFLLFVENPHIARTYGSDSSKAKEFLPHDLVNEPLLPAQKDTVVFFNFDITRVSDVGLALLSVYSIVLVLFTPNSNYARALAVGQAFIWRVAHSLLHGFILSRQSKTKAWTRHFISRGNSALDAWAQWKGLYNLTLCMSYITFIMASWKMYSFPTNWIYGSAFFRHVLGLTFIALHIYTSVSIFDDLGNFGWFYGDFFLPVQSPKLSYRGIYRYLNNPERFFGSAAFWGMALISNSSWIFFLALLAQVSTLGIIRFVEKPHMQRIYGSGLRKEAGVEKTIKQATLKSNITIPTALKQRVKTITSTIDKVIDQTAGAVEEFLDTAGPKVHELLHDTSAHIRYQAQLSVLKVLDPHTKQLGLSNYGLEVDDLSDRKIPFGAPIRVKWNAPANHSTHDWIGLYRVGDNPSTSVTQTSSQGRWSAVQPDVYSSHSKSIEYLSPNKDSGVVCFSDDLLFWKPGMYEFRYHHSKNHVVMTRSQPFEIVLSRCDSVVYEDILTALKPIISACLPGVDLEDSKLPLEDISTDQAKRIVLAIRYAFKLSFEHRVVKVDGKVSVLARRISKAKKILQSFSDSFSAEKKTA</sequence>